<reference key="1">
    <citation type="submission" date="2005-09" db="EMBL/GenBank/DDBJ databases">
        <title>Paramecium tetraurelia centrin-related protein genes.</title>
        <authorList>
            <person name="Klotz C."/>
        </authorList>
    </citation>
    <scope>NUCLEOTIDE SEQUENCE [GENOMIC DNA]</scope>
    <source>
        <strain>Stock d4-2</strain>
    </source>
</reference>
<reference key="2">
    <citation type="journal article" date="2006" name="Nature">
        <title>Global trends of whole-genome duplications revealed by the ciliate Paramecium tetraurelia.</title>
        <authorList>
            <person name="Aury J.-M."/>
            <person name="Jaillon O."/>
            <person name="Duret L."/>
            <person name="Noel B."/>
            <person name="Jubin C."/>
            <person name="Porcel B.M."/>
            <person name="Segurens B."/>
            <person name="Daubin V."/>
            <person name="Anthouard V."/>
            <person name="Aiach N."/>
            <person name="Arnaiz O."/>
            <person name="Billaut A."/>
            <person name="Beisson J."/>
            <person name="Blanc I."/>
            <person name="Bouhouche K."/>
            <person name="Camara F."/>
            <person name="Duharcourt S."/>
            <person name="Guigo R."/>
            <person name="Gogendeau D."/>
            <person name="Katinka M."/>
            <person name="Keller A.-M."/>
            <person name="Kissmehl R."/>
            <person name="Klotz C."/>
            <person name="Koll F."/>
            <person name="Le Mouel A."/>
            <person name="Lepere G."/>
            <person name="Malinsky S."/>
            <person name="Nowacki M."/>
            <person name="Nowak J.K."/>
            <person name="Plattner H."/>
            <person name="Poulain J."/>
            <person name="Ruiz F."/>
            <person name="Serrano V."/>
            <person name="Zagulski M."/>
            <person name="Dessen P."/>
            <person name="Betermier M."/>
            <person name="Weissenbach J."/>
            <person name="Scarpelli C."/>
            <person name="Schaechter V."/>
            <person name="Sperling L."/>
            <person name="Meyer E."/>
            <person name="Cohen J."/>
            <person name="Wincker P."/>
        </authorList>
    </citation>
    <scope>NUCLEOTIDE SEQUENCE [LARGE SCALE GENOMIC DNA]</scope>
    <source>
        <strain>Stock d4-2</strain>
    </source>
</reference>
<reference key="3">
    <citation type="journal article" date="1996" name="Eur. J. Biochem.">
        <title>Characterization of centrin genes in Paramecium.</title>
        <authorList>
            <person name="Madeddu L."/>
            <person name="Klotz C."/>
            <person name="Le Caer J.-P."/>
            <person name="Beisson J."/>
        </authorList>
    </citation>
    <scope>NUCLEOTIDE SEQUENCE [GENOMIC DNA] OF 2-182</scope>
    <source>
        <strain>Stock d4-2</strain>
    </source>
</reference>
<protein>
    <recommendedName>
        <fullName>Caltractin ICL1b</fullName>
    </recommendedName>
    <alternativeName>
        <fullName>Centrin-2</fullName>
    </alternativeName>
</protein>
<name>CATR2_PARTE</name>
<evidence type="ECO:0000250" key="1"/>
<evidence type="ECO:0000255" key="2">
    <source>
        <dbReference type="PROSITE-ProRule" id="PRU00448"/>
    </source>
</evidence>
<evidence type="ECO:0000256" key="3">
    <source>
        <dbReference type="SAM" id="MobiDB-lite"/>
    </source>
</evidence>
<evidence type="ECO:0000305" key="4"/>
<sequence length="182" mass="20485">MSRRGQQPPPQQQQAPPQKNQAGKFNPAEFVKPGLTEEEVLEIKEAFDLFDTDGTQSIDPKELKAAMTSLGFEAKNQTIYQMISDLDTDGSGQIDFAEFLKLMTARISERDSKADIQKVFNLFDSERAGVITLKDLRKVAKELGETMDDSELQEMIDRADSDGDAQVTFEDFYNIMTKKTFA</sequence>
<organism>
    <name type="scientific">Paramecium tetraurelia</name>
    <dbReference type="NCBI Taxonomy" id="5888"/>
    <lineage>
        <taxon>Eukaryota</taxon>
        <taxon>Sar</taxon>
        <taxon>Alveolata</taxon>
        <taxon>Ciliophora</taxon>
        <taxon>Intramacronucleata</taxon>
        <taxon>Oligohymenophorea</taxon>
        <taxon>Peniculida</taxon>
        <taxon>Parameciidae</taxon>
        <taxon>Paramecium</taxon>
    </lineage>
</organism>
<comment type="function">
    <text>Plays a fundamental role in microtubule organizing center structure and function. Component of the infraciliary lattice (ICL) and the ciliary basal bodies.</text>
</comment>
<comment type="subcellular location">
    <subcellularLocation>
        <location>Cytoplasm</location>
        <location>Cytoskeleton</location>
    </subcellularLocation>
    <text>ICL, innermost fibrous network of the cortical cytoskeleton.</text>
</comment>
<comment type="miscellaneous">
    <text evidence="1">Binds two moles of calcium per mole of protein.</text>
</comment>
<comment type="similarity">
    <text evidence="4">Belongs to the centrin family.</text>
</comment>
<accession>Q27179</accession>
<accession>Q3SEK1</accession>
<proteinExistence type="inferred from homology"/>
<gene>
    <name type="primary">Icl1b</name>
    <name type="ORF">GSPATT00033005001</name>
</gene>
<feature type="chain" id="PRO_0000073568" description="Caltractin ICL1b">
    <location>
        <begin position="1"/>
        <end position="182"/>
    </location>
</feature>
<feature type="domain" description="EF-hand 1" evidence="2">
    <location>
        <begin position="38"/>
        <end position="73"/>
    </location>
</feature>
<feature type="domain" description="EF-hand 2" evidence="2">
    <location>
        <begin position="74"/>
        <end position="109"/>
    </location>
</feature>
<feature type="domain" description="EF-hand 3" evidence="2">
    <location>
        <begin position="111"/>
        <end position="146"/>
    </location>
</feature>
<feature type="domain" description="EF-hand 4" evidence="2">
    <location>
        <begin position="147"/>
        <end position="182"/>
    </location>
</feature>
<feature type="region of interest" description="Disordered" evidence="3">
    <location>
        <begin position="1"/>
        <end position="31"/>
    </location>
</feature>
<feature type="binding site" evidence="2">
    <location>
        <position position="51"/>
    </location>
    <ligand>
        <name>Ca(2+)</name>
        <dbReference type="ChEBI" id="CHEBI:29108"/>
        <label>1</label>
    </ligand>
</feature>
<feature type="binding site" evidence="2">
    <location>
        <position position="53"/>
    </location>
    <ligand>
        <name>Ca(2+)</name>
        <dbReference type="ChEBI" id="CHEBI:29108"/>
        <label>1</label>
    </ligand>
</feature>
<feature type="binding site" evidence="2">
    <location>
        <position position="55"/>
    </location>
    <ligand>
        <name>Ca(2+)</name>
        <dbReference type="ChEBI" id="CHEBI:29108"/>
        <label>1</label>
    </ligand>
</feature>
<feature type="binding site" evidence="2">
    <location>
        <position position="57"/>
    </location>
    <ligand>
        <name>Ca(2+)</name>
        <dbReference type="ChEBI" id="CHEBI:29108"/>
        <label>1</label>
    </ligand>
</feature>
<feature type="binding site" evidence="2">
    <location>
        <position position="62"/>
    </location>
    <ligand>
        <name>Ca(2+)</name>
        <dbReference type="ChEBI" id="CHEBI:29108"/>
        <label>1</label>
    </ligand>
</feature>
<feature type="binding site" evidence="2">
    <location>
        <position position="87"/>
    </location>
    <ligand>
        <name>Ca(2+)</name>
        <dbReference type="ChEBI" id="CHEBI:29108"/>
        <label>2</label>
    </ligand>
</feature>
<feature type="binding site" evidence="2">
    <location>
        <position position="89"/>
    </location>
    <ligand>
        <name>Ca(2+)</name>
        <dbReference type="ChEBI" id="CHEBI:29108"/>
        <label>2</label>
    </ligand>
</feature>
<feature type="binding site" evidence="2">
    <location>
        <position position="91"/>
    </location>
    <ligand>
        <name>Ca(2+)</name>
        <dbReference type="ChEBI" id="CHEBI:29108"/>
        <label>2</label>
    </ligand>
</feature>
<feature type="binding site" evidence="2">
    <location>
        <position position="93"/>
    </location>
    <ligand>
        <name>Ca(2+)</name>
        <dbReference type="ChEBI" id="CHEBI:29108"/>
        <label>2</label>
    </ligand>
</feature>
<feature type="binding site" evidence="2">
    <location>
        <position position="98"/>
    </location>
    <ligand>
        <name>Ca(2+)</name>
        <dbReference type="ChEBI" id="CHEBI:29108"/>
        <label>2</label>
    </ligand>
</feature>
<feature type="sequence conflict" description="In Ref. 3; AAC47158/AAB18752." evidence="4" ref="3">
    <original>S</original>
    <variation>A</variation>
    <location>
        <position position="2"/>
    </location>
</feature>
<keyword id="KW-0106">Calcium</keyword>
<keyword id="KW-0963">Cytoplasm</keyword>
<keyword id="KW-0206">Cytoskeleton</keyword>
<keyword id="KW-0479">Metal-binding</keyword>
<keyword id="KW-1185">Reference proteome</keyword>
<keyword id="KW-0677">Repeat</keyword>
<dbReference type="EMBL" id="CR932083">
    <property type="protein sequence ID" value="CAI38923.1"/>
    <property type="molecule type" value="Genomic_DNA"/>
</dbReference>
<dbReference type="EMBL" id="CT868024">
    <property type="protein sequence ID" value="CAK63152.1"/>
    <property type="molecule type" value="Genomic_DNA"/>
</dbReference>
<dbReference type="EMBL" id="U35397">
    <property type="protein sequence ID" value="AAC47158.1"/>
    <property type="molecule type" value="Genomic_DNA"/>
</dbReference>
<dbReference type="EMBL" id="U76539">
    <property type="protein sequence ID" value="AAB18752.1"/>
    <property type="molecule type" value="Genomic_DNA"/>
</dbReference>
<dbReference type="PIR" id="S71318">
    <property type="entry name" value="S71318"/>
</dbReference>
<dbReference type="RefSeq" id="XP_001430550.1">
    <property type="nucleotide sequence ID" value="XM_001430513.1"/>
</dbReference>
<dbReference type="SMR" id="Q27179"/>
<dbReference type="STRING" id="5888.Q27179"/>
<dbReference type="EnsemblProtists" id="CAK63152">
    <property type="protein sequence ID" value="CAK63152"/>
    <property type="gene ID" value="GSPATT00033005001"/>
</dbReference>
<dbReference type="GeneID" id="5016334"/>
<dbReference type="KEGG" id="ptm:GSPATT00033005001"/>
<dbReference type="eggNOG" id="KOG0028">
    <property type="taxonomic scope" value="Eukaryota"/>
</dbReference>
<dbReference type="HOGENOM" id="CLU_061288_18_2_1"/>
<dbReference type="InParanoid" id="Q27179"/>
<dbReference type="OMA" id="AHGPINF"/>
<dbReference type="OrthoDB" id="410571at2759"/>
<dbReference type="Proteomes" id="UP000000600">
    <property type="component" value="Partially assembled WGS sequence"/>
</dbReference>
<dbReference type="GO" id="GO:0005737">
    <property type="term" value="C:cytoplasm"/>
    <property type="evidence" value="ECO:0007669"/>
    <property type="project" value="UniProtKB-KW"/>
</dbReference>
<dbReference type="GO" id="GO:0005856">
    <property type="term" value="C:cytoskeleton"/>
    <property type="evidence" value="ECO:0007669"/>
    <property type="project" value="UniProtKB-SubCell"/>
</dbReference>
<dbReference type="GO" id="GO:0005509">
    <property type="term" value="F:calcium ion binding"/>
    <property type="evidence" value="ECO:0007669"/>
    <property type="project" value="InterPro"/>
</dbReference>
<dbReference type="CDD" id="cd00051">
    <property type="entry name" value="EFh"/>
    <property type="match status" value="1"/>
</dbReference>
<dbReference type="FunFam" id="1.10.238.10:FF:000178">
    <property type="entry name" value="Calmodulin-2 A"/>
    <property type="match status" value="1"/>
</dbReference>
<dbReference type="Gene3D" id="1.10.238.10">
    <property type="entry name" value="EF-hand"/>
    <property type="match status" value="2"/>
</dbReference>
<dbReference type="InterPro" id="IPR050230">
    <property type="entry name" value="CALM/Myosin/TropC-like"/>
</dbReference>
<dbReference type="InterPro" id="IPR011992">
    <property type="entry name" value="EF-hand-dom_pair"/>
</dbReference>
<dbReference type="InterPro" id="IPR018247">
    <property type="entry name" value="EF_Hand_1_Ca_BS"/>
</dbReference>
<dbReference type="InterPro" id="IPR002048">
    <property type="entry name" value="EF_hand_dom"/>
</dbReference>
<dbReference type="PANTHER" id="PTHR23048:SF59">
    <property type="entry name" value="EF-HAND SUPERFAMILY PROTEIN"/>
    <property type="match status" value="1"/>
</dbReference>
<dbReference type="PANTHER" id="PTHR23048">
    <property type="entry name" value="MYOSIN LIGHT CHAIN 1, 3"/>
    <property type="match status" value="1"/>
</dbReference>
<dbReference type="Pfam" id="PF13499">
    <property type="entry name" value="EF-hand_7"/>
    <property type="match status" value="2"/>
</dbReference>
<dbReference type="SMART" id="SM00054">
    <property type="entry name" value="EFh"/>
    <property type="match status" value="4"/>
</dbReference>
<dbReference type="SUPFAM" id="SSF47473">
    <property type="entry name" value="EF-hand"/>
    <property type="match status" value="1"/>
</dbReference>
<dbReference type="PROSITE" id="PS00018">
    <property type="entry name" value="EF_HAND_1"/>
    <property type="match status" value="2"/>
</dbReference>
<dbReference type="PROSITE" id="PS50222">
    <property type="entry name" value="EF_HAND_2"/>
    <property type="match status" value="4"/>
</dbReference>